<gene>
    <name type="primary">Sgip1</name>
</gene>
<sequence>MMEGLKKRTRKAFGIRKKEKDTDSTGSPDRDGMQPSPHEPPYHSKAECAREGGKKASKKSNGAPNGFYAEIDWERYNSPELDEEGYSIRPEEPGSTKGKHFYSSSESEEEEESHKKFNIKIKPLQSKDVLKNAATVDELKASIGNIALSPSPVRKSPRRSPGAIKRNLSSEEVARPRRSTPTPELTSKKPLDDTLALAPLFGPPLESAFDEQKTEVLLDQPEIWGSGQPINPSMESPKLARPFPTGTPPPLPPKAVPATPPRTGSPLTVATGNDQAATEAKIEKLPSISDLDSIFGPVLSPKSVAVNTEEKWVHFSDASPEHVTPELTPREKVVTPPAASDIPADSPAPGPPGPPGSAGPPGPPGPRHVPSPLNLEEVQKKVAEQTFIKDDYLETLSSPKECGLGQRATPPPPPPPTYRTVVSSPGPGSGSGTGTASGASSPARPATPLVPCSSTTPPPPPPRPPSRPKLPPGKPGVGDVSRPFSPPIHSSSPPPIAPLARAESTSSISSTNSLSAATTPTVENEQPSLVWFDRGKFYLTFEGSSRGPSPLTMGAQDTLPVAAAFTETVNAYFKGADPSKCIVKITGEMVLSFPAGITRHFANNPSPAALTFRVINSSRLEHVLPNPQLLCCDNTQNDANTKEFWVNMPNLMTHLKKVSEQKPQATYYNVDMLKYQVSAQGIQSTPLNLAVNWRCEPGSTDLRIDYKYNTDAMTTAVALNNVQFLVPIDGGVTKLQAVLPPAVWNAEQQRILWKIPDISQKSENGGVGSLLARFQLSEGPSKPSPLVVQFTSEGSTLSGCDIELVGAGYRFSLIKKRFAAGKYLADN</sequence>
<organism>
    <name type="scientific">Rattus norvegicus</name>
    <name type="common">Rat</name>
    <dbReference type="NCBI Taxonomy" id="10116"/>
    <lineage>
        <taxon>Eukaryota</taxon>
        <taxon>Metazoa</taxon>
        <taxon>Chordata</taxon>
        <taxon>Craniata</taxon>
        <taxon>Vertebrata</taxon>
        <taxon>Euteleostomi</taxon>
        <taxon>Mammalia</taxon>
        <taxon>Eutheria</taxon>
        <taxon>Euarchontoglires</taxon>
        <taxon>Glires</taxon>
        <taxon>Rodentia</taxon>
        <taxon>Myomorpha</taxon>
        <taxon>Muroidea</taxon>
        <taxon>Muridae</taxon>
        <taxon>Murinae</taxon>
        <taxon>Rattus</taxon>
    </lineage>
</organism>
<keyword id="KW-0168">Coated pit</keyword>
<keyword id="KW-0254">Endocytosis</keyword>
<keyword id="KW-0472">Membrane</keyword>
<keyword id="KW-0597">Phosphoprotein</keyword>
<keyword id="KW-1185">Reference proteome</keyword>
<protein>
    <recommendedName>
        <fullName>SH3-containing GRB2-like protein 3-interacting protein 1</fullName>
    </recommendedName>
    <alternativeName>
        <fullName>Endophilin-3-interacting protein</fullName>
    </alternativeName>
</protein>
<proteinExistence type="evidence at protein level"/>
<evidence type="ECO:0000250" key="1">
    <source>
        <dbReference type="UniProtKB" id="Q8VD37"/>
    </source>
</evidence>
<evidence type="ECO:0000250" key="2">
    <source>
        <dbReference type="UniProtKB" id="Q9BQI5"/>
    </source>
</evidence>
<evidence type="ECO:0000255" key="3">
    <source>
        <dbReference type="PROSITE-ProRule" id="PRU00404"/>
    </source>
</evidence>
<evidence type="ECO:0000256" key="4">
    <source>
        <dbReference type="SAM" id="MobiDB-lite"/>
    </source>
</evidence>
<evidence type="ECO:0000269" key="5">
    <source>
    </source>
</evidence>
<evidence type="ECO:0000269" key="6">
    <source>
    </source>
</evidence>
<evidence type="ECO:0000305" key="7"/>
<evidence type="ECO:0007744" key="8">
    <source>
    </source>
</evidence>
<reference key="1">
    <citation type="journal article" date="2004" name="Nature">
        <title>Genome sequence of the Brown Norway rat yields insights into mammalian evolution.</title>
        <authorList>
            <person name="Gibbs R.A."/>
            <person name="Weinstock G.M."/>
            <person name="Metzker M.L."/>
            <person name="Muzny D.M."/>
            <person name="Sodergren E.J."/>
            <person name="Scherer S."/>
            <person name="Scott G."/>
            <person name="Steffen D."/>
            <person name="Worley K.C."/>
            <person name="Burch P.E."/>
            <person name="Okwuonu G."/>
            <person name="Hines S."/>
            <person name="Lewis L."/>
            <person name="Deramo C."/>
            <person name="Delgado O."/>
            <person name="Dugan-Rocha S."/>
            <person name="Miner G."/>
            <person name="Morgan M."/>
            <person name="Hawes A."/>
            <person name="Gill R."/>
            <person name="Holt R.A."/>
            <person name="Adams M.D."/>
            <person name="Amanatides P.G."/>
            <person name="Baden-Tillson H."/>
            <person name="Barnstead M."/>
            <person name="Chin S."/>
            <person name="Evans C.A."/>
            <person name="Ferriera S."/>
            <person name="Fosler C."/>
            <person name="Glodek A."/>
            <person name="Gu Z."/>
            <person name="Jennings D."/>
            <person name="Kraft C.L."/>
            <person name="Nguyen T."/>
            <person name="Pfannkoch C.M."/>
            <person name="Sitter C."/>
            <person name="Sutton G.G."/>
            <person name="Venter J.C."/>
            <person name="Woodage T."/>
            <person name="Smith D."/>
            <person name="Lee H.-M."/>
            <person name="Gustafson E."/>
            <person name="Cahill P."/>
            <person name="Kana A."/>
            <person name="Doucette-Stamm L."/>
            <person name="Weinstock K."/>
            <person name="Fechtel K."/>
            <person name="Weiss R.B."/>
            <person name="Dunn D.M."/>
            <person name="Green E.D."/>
            <person name="Blakesley R.W."/>
            <person name="Bouffard G.G."/>
            <person name="De Jong P.J."/>
            <person name="Osoegawa K."/>
            <person name="Zhu B."/>
            <person name="Marra M."/>
            <person name="Schein J."/>
            <person name="Bosdet I."/>
            <person name="Fjell C."/>
            <person name="Jones S."/>
            <person name="Krzywinski M."/>
            <person name="Mathewson C."/>
            <person name="Siddiqui A."/>
            <person name="Wye N."/>
            <person name="McPherson J."/>
            <person name="Zhao S."/>
            <person name="Fraser C.M."/>
            <person name="Shetty J."/>
            <person name="Shatsman S."/>
            <person name="Geer K."/>
            <person name="Chen Y."/>
            <person name="Abramzon S."/>
            <person name="Nierman W.C."/>
            <person name="Havlak P.H."/>
            <person name="Chen R."/>
            <person name="Durbin K.J."/>
            <person name="Egan A."/>
            <person name="Ren Y."/>
            <person name="Song X.-Z."/>
            <person name="Li B."/>
            <person name="Liu Y."/>
            <person name="Qin X."/>
            <person name="Cawley S."/>
            <person name="Cooney A.J."/>
            <person name="D'Souza L.M."/>
            <person name="Martin K."/>
            <person name="Wu J.Q."/>
            <person name="Gonzalez-Garay M.L."/>
            <person name="Jackson A.R."/>
            <person name="Kalafus K.J."/>
            <person name="McLeod M.P."/>
            <person name="Milosavljevic A."/>
            <person name="Virk D."/>
            <person name="Volkov A."/>
            <person name="Wheeler D.A."/>
            <person name="Zhang Z."/>
            <person name="Bailey J.A."/>
            <person name="Eichler E.E."/>
            <person name="Tuzun E."/>
            <person name="Birney E."/>
            <person name="Mongin E."/>
            <person name="Ureta-Vidal A."/>
            <person name="Woodwark C."/>
            <person name="Zdobnov E."/>
            <person name="Bork P."/>
            <person name="Suyama M."/>
            <person name="Torrents D."/>
            <person name="Alexandersson M."/>
            <person name="Trask B.J."/>
            <person name="Young J.M."/>
            <person name="Huang H."/>
            <person name="Wang H."/>
            <person name="Xing H."/>
            <person name="Daniels S."/>
            <person name="Gietzen D."/>
            <person name="Schmidt J."/>
            <person name="Stevens K."/>
            <person name="Vitt U."/>
            <person name="Wingrove J."/>
            <person name="Camara F."/>
            <person name="Mar Alba M."/>
            <person name="Abril J.F."/>
            <person name="Guigo R."/>
            <person name="Smit A."/>
            <person name="Dubchak I."/>
            <person name="Rubin E.M."/>
            <person name="Couronne O."/>
            <person name="Poliakov A."/>
            <person name="Huebner N."/>
            <person name="Ganten D."/>
            <person name="Goesele C."/>
            <person name="Hummel O."/>
            <person name="Kreitler T."/>
            <person name="Lee Y.-A."/>
            <person name="Monti J."/>
            <person name="Schulz H."/>
            <person name="Zimdahl H."/>
            <person name="Himmelbauer H."/>
            <person name="Lehrach H."/>
            <person name="Jacob H.J."/>
            <person name="Bromberg S."/>
            <person name="Gullings-Handley J."/>
            <person name="Jensen-Seaman M.I."/>
            <person name="Kwitek A.E."/>
            <person name="Lazar J."/>
            <person name="Pasko D."/>
            <person name="Tonellato P.J."/>
            <person name="Twigger S."/>
            <person name="Ponting C.P."/>
            <person name="Duarte J.M."/>
            <person name="Rice S."/>
            <person name="Goodstadt L."/>
            <person name="Beatson S.A."/>
            <person name="Emes R.D."/>
            <person name="Winter E.E."/>
            <person name="Webber C."/>
            <person name="Brandt P."/>
            <person name="Nyakatura G."/>
            <person name="Adetobi M."/>
            <person name="Chiaromonte F."/>
            <person name="Elnitski L."/>
            <person name="Eswara P."/>
            <person name="Hardison R.C."/>
            <person name="Hou M."/>
            <person name="Kolbe D."/>
            <person name="Makova K."/>
            <person name="Miller W."/>
            <person name="Nekrutenko A."/>
            <person name="Riemer C."/>
            <person name="Schwartz S."/>
            <person name="Taylor J."/>
            <person name="Yang S."/>
            <person name="Zhang Y."/>
            <person name="Lindpaintner K."/>
            <person name="Andrews T.D."/>
            <person name="Caccamo M."/>
            <person name="Clamp M."/>
            <person name="Clarke L."/>
            <person name="Curwen V."/>
            <person name="Durbin R.M."/>
            <person name="Eyras E."/>
            <person name="Searle S.M."/>
            <person name="Cooper G.M."/>
            <person name="Batzoglou S."/>
            <person name="Brudno M."/>
            <person name="Sidow A."/>
            <person name="Stone E.A."/>
            <person name="Payseur B.A."/>
            <person name="Bourque G."/>
            <person name="Lopez-Otin C."/>
            <person name="Puente X.S."/>
            <person name="Chakrabarti K."/>
            <person name="Chatterji S."/>
            <person name="Dewey C."/>
            <person name="Pachter L."/>
            <person name="Bray N."/>
            <person name="Yap V.B."/>
            <person name="Caspi A."/>
            <person name="Tesler G."/>
            <person name="Pevzner P.A."/>
            <person name="Haussler D."/>
            <person name="Roskin K.M."/>
            <person name="Baertsch R."/>
            <person name="Clawson H."/>
            <person name="Furey T.S."/>
            <person name="Hinrichs A.S."/>
            <person name="Karolchik D."/>
            <person name="Kent W.J."/>
            <person name="Rosenbloom K.R."/>
            <person name="Trumbower H."/>
            <person name="Weirauch M."/>
            <person name="Cooper D.N."/>
            <person name="Stenson P.D."/>
            <person name="Ma B."/>
            <person name="Brent M."/>
            <person name="Arumugam M."/>
            <person name="Shteynberg D."/>
            <person name="Copley R.R."/>
            <person name="Taylor M.S."/>
            <person name="Riethman H."/>
            <person name="Mudunuri U."/>
            <person name="Peterson J."/>
            <person name="Guyer M."/>
            <person name="Felsenfeld A."/>
            <person name="Old S."/>
            <person name="Mockrin S."/>
            <person name="Collins F.S."/>
        </authorList>
    </citation>
    <scope>NUCLEOTIDE SEQUENCE [LARGE SCALE GENOMIC DNA]</scope>
    <source>
        <strain>Brown Norway</strain>
    </source>
</reference>
<reference key="2">
    <citation type="journal article" date="2005" name="Endocrinology">
        <title>Src homology 3-domain growth factor receptor-bound 2-like (endophilin) interacting protein 1, a novel neuronal protein that regulates energy balance.</title>
        <authorList>
            <person name="Trevaskis J."/>
            <person name="Walder K."/>
            <person name="Foletta V."/>
            <person name="Kerr-Bayles L."/>
            <person name="McMillan J."/>
            <person name="Cooper A."/>
            <person name="Lee S."/>
            <person name="Bolton K."/>
            <person name="Prior M."/>
            <person name="Fahey R."/>
            <person name="Whitecross K."/>
            <person name="Morton G.J."/>
            <person name="Schwartz M.W."/>
            <person name="Collier G.R."/>
        </authorList>
    </citation>
    <scope>FUNCTION IN ENERGY HOMEOSTASIS</scope>
</reference>
<reference key="3">
    <citation type="journal article" date="2007" name="J. Biol. Chem.">
        <title>SGIP1alpha is an endocytic protein that directly interacts with phospholipids and Eps15.</title>
        <authorList>
            <person name="Uezu A."/>
            <person name="Horiuchi A."/>
            <person name="Kanda K."/>
            <person name="Kikuchi N."/>
            <person name="Umeda K."/>
            <person name="Tsujita K."/>
            <person name="Suetsugu S."/>
            <person name="Araki N."/>
            <person name="Yamamoto H."/>
            <person name="Takenawa T."/>
            <person name="Nakanishi H."/>
        </authorList>
    </citation>
    <scope>IDENTIFICATION BY MASS SPECTROMETRY</scope>
    <scope>TISSUE SPECIFICITY</scope>
</reference>
<reference key="4">
    <citation type="journal article" date="2012" name="Nat. Commun.">
        <title>Quantitative maps of protein phosphorylation sites across 14 different rat organs and tissues.</title>
        <authorList>
            <person name="Lundby A."/>
            <person name="Secher A."/>
            <person name="Lage K."/>
            <person name="Nordsborg N.B."/>
            <person name="Dmytriyev A."/>
            <person name="Lundby C."/>
            <person name="Olsen J.V."/>
        </authorList>
    </citation>
    <scope>PHOSPHORYLATION [LARGE SCALE ANALYSIS] AT SER-78; SER-104; SER-105; SER-107; SER-169; SER-236; THR-247; SER-287; SER-300; SER-316; SER-319; THR-324; THR-335; SER-371; SER-398 AND THR-409</scope>
    <scope>IDENTIFICATION BY MASS SPECTROMETRY [LARGE SCALE ANALYSIS]</scope>
</reference>
<comment type="function">
    <text evidence="5">May function in clathrin-mediated endocytosis. Has both a membrane binding/tubulating activity and the ability to recruit proteins essential to the formation of functional clathrin-coated pits. Has a preference for membranes enriched in phosphatidylserine and phosphoinositides and is required for the endocytosis of the transferrin receptor. May also bind tubulin. May play a role in the regulation of energy homeostasis.</text>
</comment>
<comment type="subunit">
    <text evidence="1 2 7">Interacts with proteins essential or regulating the formation of functional clathrin-coated pits (Probable). Interacts with CANX (By similarity). Interacts with AP2A1 (By similarity). Interacts with EPS15 (By similarity). Interacts with SH3GL3 (By similarity). Interacts with AMPH (By similarity). Interacts with ITSN1 (via SH3 domains) (By similarity). Interacts with and REPS1 (By similarity).</text>
</comment>
<comment type="subcellular location">
    <subcellularLocation>
        <location evidence="2">Membrane</location>
        <location evidence="2">Clathrin-coated pit</location>
        <topology evidence="2">Peripheral membrane protein</topology>
        <orientation evidence="2">Cytoplasmic side</orientation>
    </subcellularLocation>
</comment>
<comment type="tissue specificity">
    <text evidence="6">Specifically expressed in brain (at protein level).</text>
</comment>
<name>SGIP1_RAT</name>
<dbReference type="EMBL" id="AABR03040176">
    <property type="status" value="NOT_ANNOTATED_CDS"/>
    <property type="molecule type" value="Genomic_DNA"/>
</dbReference>
<dbReference type="EMBL" id="AABR03040554">
    <property type="status" value="NOT_ANNOTATED_CDS"/>
    <property type="molecule type" value="Genomic_DNA"/>
</dbReference>
<dbReference type="RefSeq" id="XP_017449253.1">
    <property type="nucleotide sequence ID" value="XM_017593764.1"/>
</dbReference>
<dbReference type="RefSeq" id="XP_017458523.1">
    <property type="nucleotide sequence ID" value="XM_017603034.1"/>
</dbReference>
<dbReference type="SMR" id="P0DJJ3"/>
<dbReference type="FunCoup" id="P0DJJ3">
    <property type="interactions" value="1625"/>
</dbReference>
<dbReference type="IntAct" id="P0DJJ3">
    <property type="interactions" value="1"/>
</dbReference>
<dbReference type="MINT" id="P0DJJ3"/>
<dbReference type="STRING" id="10116.ENSRNOP00000059906"/>
<dbReference type="GlyGen" id="P0DJJ3">
    <property type="glycosylation" value="1 site"/>
</dbReference>
<dbReference type="iPTMnet" id="P0DJJ3"/>
<dbReference type="PhosphoSitePlus" id="P0DJJ3"/>
<dbReference type="PaxDb" id="10116-ENSRNOP00000048424"/>
<dbReference type="Ensembl" id="ENSRNOT00000106500.1">
    <property type="protein sequence ID" value="ENSRNOP00000096859.1"/>
    <property type="gene ID" value="ENSRNOG00000006357.9"/>
</dbReference>
<dbReference type="AGR" id="RGD:1564957"/>
<dbReference type="RGD" id="1564957">
    <property type="gene designation" value="Sgip1"/>
</dbReference>
<dbReference type="eggNOG" id="KOG2398">
    <property type="taxonomic scope" value="Eukaryota"/>
</dbReference>
<dbReference type="GeneTree" id="ENSGT00940000156301"/>
<dbReference type="InParanoid" id="P0DJJ3"/>
<dbReference type="PRO" id="PR:P0DJJ3"/>
<dbReference type="Proteomes" id="UP000002494">
    <property type="component" value="Chromosome 5"/>
</dbReference>
<dbReference type="GO" id="GO:0030122">
    <property type="term" value="C:AP-2 adaptor complex"/>
    <property type="evidence" value="ECO:0000250"/>
    <property type="project" value="UniProtKB"/>
</dbReference>
<dbReference type="GO" id="GO:0005905">
    <property type="term" value="C:clathrin-coated pit"/>
    <property type="evidence" value="ECO:0000266"/>
    <property type="project" value="RGD"/>
</dbReference>
<dbReference type="GO" id="GO:0030136">
    <property type="term" value="C:clathrin-coated vesicle"/>
    <property type="evidence" value="ECO:0000250"/>
    <property type="project" value="UniProtKB"/>
</dbReference>
<dbReference type="GO" id="GO:0005737">
    <property type="term" value="C:cytoplasm"/>
    <property type="evidence" value="ECO:0000250"/>
    <property type="project" value="UniProtKB"/>
</dbReference>
<dbReference type="GO" id="GO:0005886">
    <property type="term" value="C:plasma membrane"/>
    <property type="evidence" value="ECO:0000250"/>
    <property type="project" value="UniProtKB"/>
</dbReference>
<dbReference type="GO" id="GO:0098793">
    <property type="term" value="C:presynapse"/>
    <property type="evidence" value="ECO:0000314"/>
    <property type="project" value="SynGO"/>
</dbReference>
<dbReference type="GO" id="GO:0043195">
    <property type="term" value="C:terminal bouton"/>
    <property type="evidence" value="ECO:0007005"/>
    <property type="project" value="ParkinsonsUK-UCL"/>
</dbReference>
<dbReference type="GO" id="GO:0008017">
    <property type="term" value="F:microtubule binding"/>
    <property type="evidence" value="ECO:0000250"/>
    <property type="project" value="UniProtKB"/>
</dbReference>
<dbReference type="GO" id="GO:0005543">
    <property type="term" value="F:phospholipid binding"/>
    <property type="evidence" value="ECO:0000250"/>
    <property type="project" value="UniProtKB"/>
</dbReference>
<dbReference type="GO" id="GO:0017124">
    <property type="term" value="F:SH3 domain binding"/>
    <property type="evidence" value="ECO:0000266"/>
    <property type="project" value="RGD"/>
</dbReference>
<dbReference type="GO" id="GO:0015631">
    <property type="term" value="F:tubulin binding"/>
    <property type="evidence" value="ECO:0000353"/>
    <property type="project" value="UniProtKB"/>
</dbReference>
<dbReference type="GO" id="GO:0072583">
    <property type="term" value="P:clathrin-dependent endocytosis"/>
    <property type="evidence" value="ECO:0007669"/>
    <property type="project" value="InterPro"/>
</dbReference>
<dbReference type="GO" id="GO:0097009">
    <property type="term" value="P:energy homeostasis"/>
    <property type="evidence" value="ECO:0000315"/>
    <property type="project" value="UniProtKB"/>
</dbReference>
<dbReference type="GO" id="GO:1904000">
    <property type="term" value="P:positive regulation of eating behavior"/>
    <property type="evidence" value="ECO:0000315"/>
    <property type="project" value="RGD"/>
</dbReference>
<dbReference type="GO" id="GO:2000253">
    <property type="term" value="P:positive regulation of feeding behavior"/>
    <property type="evidence" value="ECO:0000315"/>
    <property type="project" value="UniProtKB"/>
</dbReference>
<dbReference type="GO" id="GO:0040018">
    <property type="term" value="P:positive regulation of multicellular organism growth"/>
    <property type="evidence" value="ECO:0000315"/>
    <property type="project" value="RGD"/>
</dbReference>
<dbReference type="GO" id="GO:0048260">
    <property type="term" value="P:positive regulation of receptor-mediated endocytosis"/>
    <property type="evidence" value="ECO:0000250"/>
    <property type="project" value="UniProtKB"/>
</dbReference>
<dbReference type="GO" id="GO:0002021">
    <property type="term" value="P:response to dietary excess"/>
    <property type="evidence" value="ECO:0000315"/>
    <property type="project" value="UniProtKB"/>
</dbReference>
<dbReference type="GO" id="GO:0042594">
    <property type="term" value="P:response to starvation"/>
    <property type="evidence" value="ECO:0000270"/>
    <property type="project" value="RGD"/>
</dbReference>
<dbReference type="GO" id="GO:0048488">
    <property type="term" value="P:synaptic vesicle endocytosis"/>
    <property type="evidence" value="ECO:0000266"/>
    <property type="project" value="RGD"/>
</dbReference>
<dbReference type="CDD" id="cd09266">
    <property type="entry name" value="SGIP1_MHD"/>
    <property type="match status" value="1"/>
</dbReference>
<dbReference type="FunFam" id="2.60.40.1170:FF:000005">
    <property type="entry name" value="SH3-containing GRB2-like protein 3-interacting protein 1 isoform X3"/>
    <property type="match status" value="1"/>
</dbReference>
<dbReference type="Gene3D" id="2.60.40.1170">
    <property type="entry name" value="Mu homology domain, subdomain B"/>
    <property type="match status" value="2"/>
</dbReference>
<dbReference type="InterPro" id="IPR036168">
    <property type="entry name" value="AP2_Mu_C_sf"/>
</dbReference>
<dbReference type="InterPro" id="IPR028565">
    <property type="entry name" value="MHD"/>
</dbReference>
<dbReference type="InterPro" id="IPR018808">
    <property type="entry name" value="Muniscin_C"/>
</dbReference>
<dbReference type="InterPro" id="IPR037984">
    <property type="entry name" value="SGIP1_MHD"/>
</dbReference>
<dbReference type="PANTHER" id="PTHR23065:SF8">
    <property type="entry name" value="F-BAR DOMAIN ONLY PROTEIN 2"/>
    <property type="match status" value="1"/>
</dbReference>
<dbReference type="PANTHER" id="PTHR23065">
    <property type="entry name" value="PROLINE-SERINE-THREONINE PHOSPHATASE INTERACTING PROTEIN 1"/>
    <property type="match status" value="1"/>
</dbReference>
<dbReference type="Pfam" id="PF10291">
    <property type="entry name" value="muHD"/>
    <property type="match status" value="1"/>
</dbReference>
<dbReference type="SUPFAM" id="SSF49447">
    <property type="entry name" value="Second domain of Mu2 adaptin subunit (ap50) of ap2 adaptor"/>
    <property type="match status" value="1"/>
</dbReference>
<dbReference type="PROSITE" id="PS51072">
    <property type="entry name" value="MHD"/>
    <property type="match status" value="1"/>
</dbReference>
<feature type="chain" id="PRO_0000418108" description="SH3-containing GRB2-like protein 3-interacting protein 1">
    <location>
        <begin position="1"/>
        <end position="827"/>
    </location>
</feature>
<feature type="domain" description="MHD" evidence="3">
    <location>
        <begin position="558"/>
        <end position="826"/>
    </location>
</feature>
<feature type="region of interest" description="Disordered" evidence="4">
    <location>
        <begin position="1"/>
        <end position="115"/>
    </location>
</feature>
<feature type="region of interest" description="Disordered" evidence="4">
    <location>
        <begin position="142"/>
        <end position="205"/>
    </location>
</feature>
<feature type="region of interest" description="Disordered" evidence="4">
    <location>
        <begin position="223"/>
        <end position="278"/>
    </location>
</feature>
<feature type="region of interest" description="Disordered" evidence="4">
    <location>
        <begin position="314"/>
        <end position="523"/>
    </location>
</feature>
<feature type="region of interest" description="Interaction with DPF motifs-containing proteins" evidence="2">
    <location>
        <begin position="560"/>
        <end position="566"/>
    </location>
</feature>
<feature type="region of interest" description="Interaction with DPF motifs-containing proteins" evidence="2">
    <location>
        <begin position="592"/>
        <end position="594"/>
    </location>
</feature>
<feature type="region of interest" description="Necessary and sufficient to mediate interaction with CANX" evidence="1">
    <location>
        <begin position="648"/>
        <end position="827"/>
    </location>
</feature>
<feature type="region of interest" description="Interaction with DPF motifs-containing proteins" evidence="2">
    <location>
        <begin position="666"/>
        <end position="669"/>
    </location>
</feature>
<feature type="region of interest" description="Interaction with DPF motifs-containing proteins" evidence="2">
    <location>
        <begin position="812"/>
        <end position="817"/>
    </location>
</feature>
<feature type="compositionally biased region" description="Basic and acidic residues" evidence="4">
    <location>
        <begin position="16"/>
        <end position="32"/>
    </location>
</feature>
<feature type="compositionally biased region" description="Basic and acidic residues" evidence="4">
    <location>
        <begin position="40"/>
        <end position="54"/>
    </location>
</feature>
<feature type="compositionally biased region" description="Pro residues" evidence="4">
    <location>
        <begin position="245"/>
        <end position="260"/>
    </location>
</feature>
<feature type="compositionally biased region" description="Polar residues" evidence="4">
    <location>
        <begin position="265"/>
        <end position="276"/>
    </location>
</feature>
<feature type="compositionally biased region" description="Basic and acidic residues" evidence="4">
    <location>
        <begin position="314"/>
        <end position="333"/>
    </location>
</feature>
<feature type="compositionally biased region" description="Low complexity" evidence="4">
    <location>
        <begin position="336"/>
        <end position="345"/>
    </location>
</feature>
<feature type="compositionally biased region" description="Pro residues" evidence="4">
    <location>
        <begin position="346"/>
        <end position="369"/>
    </location>
</feature>
<feature type="compositionally biased region" description="Basic and acidic residues" evidence="4">
    <location>
        <begin position="377"/>
        <end position="392"/>
    </location>
</feature>
<feature type="compositionally biased region" description="Low complexity" evidence="4">
    <location>
        <begin position="436"/>
        <end position="455"/>
    </location>
</feature>
<feature type="compositionally biased region" description="Pro residues" evidence="4">
    <location>
        <begin position="456"/>
        <end position="474"/>
    </location>
</feature>
<feature type="compositionally biased region" description="Low complexity" evidence="4">
    <location>
        <begin position="481"/>
        <end position="491"/>
    </location>
</feature>
<feature type="compositionally biased region" description="Low complexity" evidence="4">
    <location>
        <begin position="498"/>
        <end position="521"/>
    </location>
</feature>
<feature type="modified residue" description="Phosphoserine" evidence="8">
    <location>
        <position position="78"/>
    </location>
</feature>
<feature type="modified residue" description="Phosphoserine" evidence="8">
    <location>
        <position position="104"/>
    </location>
</feature>
<feature type="modified residue" description="Phosphoserine" evidence="8">
    <location>
        <position position="105"/>
    </location>
</feature>
<feature type="modified residue" description="Phosphoserine" evidence="8">
    <location>
        <position position="107"/>
    </location>
</feature>
<feature type="modified residue" description="Phosphoserine" evidence="1">
    <location>
        <position position="149"/>
    </location>
</feature>
<feature type="modified residue" description="Phosphoserine" evidence="1">
    <location>
        <position position="151"/>
    </location>
</feature>
<feature type="modified residue" description="Phosphoserine" evidence="1">
    <location>
        <position position="156"/>
    </location>
</feature>
<feature type="modified residue" description="Phosphoserine" evidence="8">
    <location>
        <position position="169"/>
    </location>
</feature>
<feature type="modified residue" description="Phosphothreonine" evidence="1">
    <location>
        <position position="180"/>
    </location>
</feature>
<feature type="modified residue" description="Phosphothreonine" evidence="1">
    <location>
        <position position="182"/>
    </location>
</feature>
<feature type="modified residue" description="Phosphoserine" evidence="8">
    <location>
        <position position="236"/>
    </location>
</feature>
<feature type="modified residue" description="Phosphothreonine" evidence="8">
    <location>
        <position position="247"/>
    </location>
</feature>
<feature type="modified residue" description="Phosphothreonine" evidence="1">
    <location>
        <position position="259"/>
    </location>
</feature>
<feature type="modified residue" description="Phosphoserine" evidence="1">
    <location>
        <position position="265"/>
    </location>
</feature>
<feature type="modified residue" description="Phosphoserine" evidence="8">
    <location>
        <position position="287"/>
    </location>
</feature>
<feature type="modified residue" description="Phosphoserine" evidence="1">
    <location>
        <position position="289"/>
    </location>
</feature>
<feature type="modified residue" description="Phosphoserine" evidence="8">
    <location>
        <position position="300"/>
    </location>
</feature>
<feature type="modified residue" description="Phosphoserine" evidence="8">
    <location>
        <position position="316"/>
    </location>
</feature>
<feature type="modified residue" description="Phosphoserine" evidence="8">
    <location>
        <position position="319"/>
    </location>
</feature>
<feature type="modified residue" description="Phosphothreonine" evidence="8">
    <location>
        <position position="324"/>
    </location>
</feature>
<feature type="modified residue" description="Phosphothreonine" evidence="1">
    <location>
        <position position="328"/>
    </location>
</feature>
<feature type="modified residue" description="Phosphothreonine" evidence="8">
    <location>
        <position position="335"/>
    </location>
</feature>
<feature type="modified residue" description="Phosphoserine" evidence="8">
    <location>
        <position position="371"/>
    </location>
</feature>
<feature type="modified residue" description="Phosphoserine" evidence="8">
    <location>
        <position position="398"/>
    </location>
</feature>
<feature type="modified residue" description="Phosphothreonine" evidence="8">
    <location>
        <position position="409"/>
    </location>
</feature>
<feature type="modified residue" description="Phosphoserine" evidence="1">
    <location>
        <position position="485"/>
    </location>
</feature>
<accession>P0DJJ3</accession>